<sequence length="407" mass="46147">MQIYLVGGAVRDSLLNIDVKDKDWVVVGSTPTHMNSLGYQSVGQDFPVFLHPRTKEEYALARTERKSGQGYKGFTCYAEADVTLEEDLLRRDLTINAIAQSDKGLLIDPYHGQEDLKNRLLRHVSNAFVEDPLRVLRVARFAARFHYLGFTIAPETMQLMKTLVSSGELSHLTPERVWQEWEKSLSSKHPNIFLSVLKECGALAVVLPEIDALFGVPQPEQWHPEIDTGMHTLMVSQQASLLSTSLPIRFAAQVHDLGKGITPESEWPSHKMHCHTGIKVIKNLCKRVRVPNEYKELALLVCEHHTNVHRASELRAQTFIKIFDKMDLWRKPERLESILLCCQADHAGRLGLELNPYPQKERMESAFNAAQHVEVKEVVAAGFKGPEIRDELTKRRIEAVKVALLIN</sequence>
<name>CCA_ALISL</name>
<evidence type="ECO:0000255" key="1">
    <source>
        <dbReference type="HAMAP-Rule" id="MF_01261"/>
    </source>
</evidence>
<feature type="chain" id="PRO_1000140022" description="Multifunctional CCA protein">
    <location>
        <begin position="1"/>
        <end position="407"/>
    </location>
</feature>
<feature type="domain" description="HD" evidence="1">
    <location>
        <begin position="228"/>
        <end position="329"/>
    </location>
</feature>
<feature type="binding site" evidence="1">
    <location>
        <position position="8"/>
    </location>
    <ligand>
        <name>ATP</name>
        <dbReference type="ChEBI" id="CHEBI:30616"/>
    </ligand>
</feature>
<feature type="binding site" evidence="1">
    <location>
        <position position="8"/>
    </location>
    <ligand>
        <name>CTP</name>
        <dbReference type="ChEBI" id="CHEBI:37563"/>
    </ligand>
</feature>
<feature type="binding site" evidence="1">
    <location>
        <position position="11"/>
    </location>
    <ligand>
        <name>ATP</name>
        <dbReference type="ChEBI" id="CHEBI:30616"/>
    </ligand>
</feature>
<feature type="binding site" evidence="1">
    <location>
        <position position="11"/>
    </location>
    <ligand>
        <name>CTP</name>
        <dbReference type="ChEBI" id="CHEBI:37563"/>
    </ligand>
</feature>
<feature type="binding site" evidence="1">
    <location>
        <position position="21"/>
    </location>
    <ligand>
        <name>Mg(2+)</name>
        <dbReference type="ChEBI" id="CHEBI:18420"/>
    </ligand>
</feature>
<feature type="binding site" evidence="1">
    <location>
        <position position="23"/>
    </location>
    <ligand>
        <name>Mg(2+)</name>
        <dbReference type="ChEBI" id="CHEBI:18420"/>
    </ligand>
</feature>
<feature type="binding site" evidence="1">
    <location>
        <position position="91"/>
    </location>
    <ligand>
        <name>ATP</name>
        <dbReference type="ChEBI" id="CHEBI:30616"/>
    </ligand>
</feature>
<feature type="binding site" evidence="1">
    <location>
        <position position="91"/>
    </location>
    <ligand>
        <name>CTP</name>
        <dbReference type="ChEBI" id="CHEBI:37563"/>
    </ligand>
</feature>
<feature type="binding site" evidence="1">
    <location>
        <position position="137"/>
    </location>
    <ligand>
        <name>ATP</name>
        <dbReference type="ChEBI" id="CHEBI:30616"/>
    </ligand>
</feature>
<feature type="binding site" evidence="1">
    <location>
        <position position="137"/>
    </location>
    <ligand>
        <name>CTP</name>
        <dbReference type="ChEBI" id="CHEBI:37563"/>
    </ligand>
</feature>
<feature type="binding site" evidence="1">
    <location>
        <position position="140"/>
    </location>
    <ligand>
        <name>ATP</name>
        <dbReference type="ChEBI" id="CHEBI:30616"/>
    </ligand>
</feature>
<feature type="binding site" evidence="1">
    <location>
        <position position="140"/>
    </location>
    <ligand>
        <name>CTP</name>
        <dbReference type="ChEBI" id="CHEBI:37563"/>
    </ligand>
</feature>
<organism>
    <name type="scientific">Aliivibrio salmonicida (strain LFI1238)</name>
    <name type="common">Vibrio salmonicida (strain LFI1238)</name>
    <dbReference type="NCBI Taxonomy" id="316275"/>
    <lineage>
        <taxon>Bacteria</taxon>
        <taxon>Pseudomonadati</taxon>
        <taxon>Pseudomonadota</taxon>
        <taxon>Gammaproteobacteria</taxon>
        <taxon>Vibrionales</taxon>
        <taxon>Vibrionaceae</taxon>
        <taxon>Aliivibrio</taxon>
    </lineage>
</organism>
<dbReference type="EC" id="2.7.7.72" evidence="1"/>
<dbReference type="EC" id="3.1.3.-" evidence="1"/>
<dbReference type="EC" id="3.1.4.-" evidence="1"/>
<dbReference type="EMBL" id="FM178379">
    <property type="protein sequence ID" value="CAQ80373.1"/>
    <property type="molecule type" value="Genomic_DNA"/>
</dbReference>
<dbReference type="RefSeq" id="WP_012551141.1">
    <property type="nucleotide sequence ID" value="NC_011312.1"/>
</dbReference>
<dbReference type="SMR" id="B6EM10"/>
<dbReference type="KEGG" id="vsa:VSAL_I2689"/>
<dbReference type="eggNOG" id="COG0617">
    <property type="taxonomic scope" value="Bacteria"/>
</dbReference>
<dbReference type="HOGENOM" id="CLU_015961_1_1_6"/>
<dbReference type="Proteomes" id="UP000001730">
    <property type="component" value="Chromosome 1"/>
</dbReference>
<dbReference type="GO" id="GO:0005524">
    <property type="term" value="F:ATP binding"/>
    <property type="evidence" value="ECO:0007669"/>
    <property type="project" value="UniProtKB-UniRule"/>
</dbReference>
<dbReference type="GO" id="GO:0004810">
    <property type="term" value="F:CCA tRNA nucleotidyltransferase activity"/>
    <property type="evidence" value="ECO:0007669"/>
    <property type="project" value="UniProtKB-UniRule"/>
</dbReference>
<dbReference type="GO" id="GO:0004112">
    <property type="term" value="F:cyclic-nucleotide phosphodiesterase activity"/>
    <property type="evidence" value="ECO:0007669"/>
    <property type="project" value="UniProtKB-UniRule"/>
</dbReference>
<dbReference type="GO" id="GO:0000287">
    <property type="term" value="F:magnesium ion binding"/>
    <property type="evidence" value="ECO:0007669"/>
    <property type="project" value="UniProtKB-UniRule"/>
</dbReference>
<dbReference type="GO" id="GO:0016791">
    <property type="term" value="F:phosphatase activity"/>
    <property type="evidence" value="ECO:0007669"/>
    <property type="project" value="UniProtKB-UniRule"/>
</dbReference>
<dbReference type="GO" id="GO:0000049">
    <property type="term" value="F:tRNA binding"/>
    <property type="evidence" value="ECO:0007669"/>
    <property type="project" value="UniProtKB-UniRule"/>
</dbReference>
<dbReference type="GO" id="GO:0042245">
    <property type="term" value="P:RNA repair"/>
    <property type="evidence" value="ECO:0007669"/>
    <property type="project" value="UniProtKB-KW"/>
</dbReference>
<dbReference type="GO" id="GO:0001680">
    <property type="term" value="P:tRNA 3'-terminal CCA addition"/>
    <property type="evidence" value="ECO:0007669"/>
    <property type="project" value="UniProtKB-UniRule"/>
</dbReference>
<dbReference type="CDD" id="cd00077">
    <property type="entry name" value="HDc"/>
    <property type="match status" value="1"/>
</dbReference>
<dbReference type="CDD" id="cd05398">
    <property type="entry name" value="NT_ClassII-CCAase"/>
    <property type="match status" value="1"/>
</dbReference>
<dbReference type="FunFam" id="1.10.3090.10:FF:000001">
    <property type="entry name" value="Multifunctional CCA protein"/>
    <property type="match status" value="1"/>
</dbReference>
<dbReference type="Gene3D" id="3.30.460.10">
    <property type="entry name" value="Beta Polymerase, domain 2"/>
    <property type="match status" value="1"/>
</dbReference>
<dbReference type="Gene3D" id="1.10.3090.10">
    <property type="entry name" value="cca-adding enzyme, domain 2"/>
    <property type="match status" value="1"/>
</dbReference>
<dbReference type="HAMAP" id="MF_01261">
    <property type="entry name" value="CCA_bact_type1"/>
    <property type="match status" value="1"/>
</dbReference>
<dbReference type="HAMAP" id="MF_01262">
    <property type="entry name" value="CCA_bact_type2"/>
    <property type="match status" value="1"/>
</dbReference>
<dbReference type="InterPro" id="IPR012006">
    <property type="entry name" value="CCA_bact"/>
</dbReference>
<dbReference type="InterPro" id="IPR003607">
    <property type="entry name" value="HD/PDEase_dom"/>
</dbReference>
<dbReference type="InterPro" id="IPR006674">
    <property type="entry name" value="HD_domain"/>
</dbReference>
<dbReference type="InterPro" id="IPR043519">
    <property type="entry name" value="NT_sf"/>
</dbReference>
<dbReference type="InterPro" id="IPR002646">
    <property type="entry name" value="PolA_pol_head_dom"/>
</dbReference>
<dbReference type="InterPro" id="IPR032828">
    <property type="entry name" value="PolyA_RNA-bd"/>
</dbReference>
<dbReference type="InterPro" id="IPR050124">
    <property type="entry name" value="tRNA_CCA-adding_enzyme"/>
</dbReference>
<dbReference type="NCBIfam" id="NF008137">
    <property type="entry name" value="PRK10885.1"/>
    <property type="match status" value="1"/>
</dbReference>
<dbReference type="PANTHER" id="PTHR47545">
    <property type="entry name" value="MULTIFUNCTIONAL CCA PROTEIN"/>
    <property type="match status" value="1"/>
</dbReference>
<dbReference type="PANTHER" id="PTHR47545:SF1">
    <property type="entry name" value="MULTIFUNCTIONAL CCA PROTEIN"/>
    <property type="match status" value="1"/>
</dbReference>
<dbReference type="Pfam" id="PF01966">
    <property type="entry name" value="HD"/>
    <property type="match status" value="1"/>
</dbReference>
<dbReference type="Pfam" id="PF01743">
    <property type="entry name" value="PolyA_pol"/>
    <property type="match status" value="1"/>
</dbReference>
<dbReference type="Pfam" id="PF12627">
    <property type="entry name" value="PolyA_pol_RNAbd"/>
    <property type="match status" value="1"/>
</dbReference>
<dbReference type="PIRSF" id="PIRSF000813">
    <property type="entry name" value="CCA_bact"/>
    <property type="match status" value="1"/>
</dbReference>
<dbReference type="SUPFAM" id="SSF81301">
    <property type="entry name" value="Nucleotidyltransferase"/>
    <property type="match status" value="1"/>
</dbReference>
<dbReference type="SUPFAM" id="SSF81891">
    <property type="entry name" value="Poly A polymerase C-terminal region-like"/>
    <property type="match status" value="1"/>
</dbReference>
<dbReference type="PROSITE" id="PS51831">
    <property type="entry name" value="HD"/>
    <property type="match status" value="1"/>
</dbReference>
<keyword id="KW-0067">ATP-binding</keyword>
<keyword id="KW-0378">Hydrolase</keyword>
<keyword id="KW-0460">Magnesium</keyword>
<keyword id="KW-0479">Metal-binding</keyword>
<keyword id="KW-0511">Multifunctional enzyme</keyword>
<keyword id="KW-0533">Nickel</keyword>
<keyword id="KW-0547">Nucleotide-binding</keyword>
<keyword id="KW-0548">Nucleotidyltransferase</keyword>
<keyword id="KW-0692">RNA repair</keyword>
<keyword id="KW-0694">RNA-binding</keyword>
<keyword id="KW-0808">Transferase</keyword>
<keyword id="KW-0819">tRNA processing</keyword>
<protein>
    <recommendedName>
        <fullName evidence="1">Multifunctional CCA protein</fullName>
    </recommendedName>
    <domain>
        <recommendedName>
            <fullName evidence="1">CCA-adding enzyme</fullName>
            <ecNumber evidence="1">2.7.7.72</ecNumber>
        </recommendedName>
        <alternativeName>
            <fullName evidence="1">CCA tRNA nucleotidyltransferase</fullName>
        </alternativeName>
        <alternativeName>
            <fullName evidence="1">tRNA CCA-pyrophosphorylase</fullName>
        </alternativeName>
        <alternativeName>
            <fullName evidence="1">tRNA adenylyl-/cytidylyl-transferase</fullName>
        </alternativeName>
        <alternativeName>
            <fullName evidence="1">tRNA nucleotidyltransferase</fullName>
        </alternativeName>
        <alternativeName>
            <fullName evidence="1">tRNA-NT</fullName>
        </alternativeName>
    </domain>
    <domain>
        <recommendedName>
            <fullName evidence="1">2'-nucleotidase</fullName>
            <ecNumber evidence="1">3.1.3.-</ecNumber>
        </recommendedName>
    </domain>
    <domain>
        <recommendedName>
            <fullName evidence="1">2',3'-cyclic phosphodiesterase</fullName>
            <ecNumber evidence="1">3.1.4.-</ecNumber>
        </recommendedName>
    </domain>
    <domain>
        <recommendedName>
            <fullName evidence="1">Phosphatase</fullName>
            <ecNumber evidence="1">3.1.3.-</ecNumber>
        </recommendedName>
    </domain>
</protein>
<reference key="1">
    <citation type="journal article" date="2008" name="BMC Genomics">
        <title>The genome sequence of the fish pathogen Aliivibrio salmonicida strain LFI1238 shows extensive evidence of gene decay.</title>
        <authorList>
            <person name="Hjerde E."/>
            <person name="Lorentzen M.S."/>
            <person name="Holden M.T."/>
            <person name="Seeger K."/>
            <person name="Paulsen S."/>
            <person name="Bason N."/>
            <person name="Churcher C."/>
            <person name="Harris D."/>
            <person name="Norbertczak H."/>
            <person name="Quail M.A."/>
            <person name="Sanders S."/>
            <person name="Thurston S."/>
            <person name="Parkhill J."/>
            <person name="Willassen N.P."/>
            <person name="Thomson N.R."/>
        </authorList>
    </citation>
    <scope>NUCLEOTIDE SEQUENCE [LARGE SCALE GENOMIC DNA]</scope>
    <source>
        <strain>LFI1238</strain>
    </source>
</reference>
<proteinExistence type="inferred from homology"/>
<gene>
    <name evidence="1" type="primary">cca</name>
    <name type="ordered locus">VSAL_I2689</name>
</gene>
<accession>B6EM10</accession>
<comment type="function">
    <text evidence="1">Catalyzes the addition and repair of the essential 3'-terminal CCA sequence in tRNAs without using a nucleic acid template. Adds these three nucleotides in the order of C, C, and A to the tRNA nucleotide-73, using CTP and ATP as substrates and producing inorganic pyrophosphate. tRNA 3'-terminal CCA addition is required both for tRNA processing and repair. Also involved in tRNA surveillance by mediating tandem CCA addition to generate a CCACCA at the 3' terminus of unstable tRNAs. While stable tRNAs receive only 3'-terminal CCA, unstable tRNAs are marked with CCACCA and rapidly degraded.</text>
</comment>
<comment type="catalytic activity">
    <reaction evidence="1">
        <text>a tRNA precursor + 2 CTP + ATP = a tRNA with a 3' CCA end + 3 diphosphate</text>
        <dbReference type="Rhea" id="RHEA:14433"/>
        <dbReference type="Rhea" id="RHEA-COMP:10465"/>
        <dbReference type="Rhea" id="RHEA-COMP:10468"/>
        <dbReference type="ChEBI" id="CHEBI:30616"/>
        <dbReference type="ChEBI" id="CHEBI:33019"/>
        <dbReference type="ChEBI" id="CHEBI:37563"/>
        <dbReference type="ChEBI" id="CHEBI:74896"/>
        <dbReference type="ChEBI" id="CHEBI:83071"/>
        <dbReference type="EC" id="2.7.7.72"/>
    </reaction>
</comment>
<comment type="catalytic activity">
    <reaction evidence="1">
        <text>a tRNA with a 3' CCA end + 2 CTP + ATP = a tRNA with a 3' CCACCA end + 3 diphosphate</text>
        <dbReference type="Rhea" id="RHEA:76235"/>
        <dbReference type="Rhea" id="RHEA-COMP:10468"/>
        <dbReference type="Rhea" id="RHEA-COMP:18655"/>
        <dbReference type="ChEBI" id="CHEBI:30616"/>
        <dbReference type="ChEBI" id="CHEBI:33019"/>
        <dbReference type="ChEBI" id="CHEBI:37563"/>
        <dbReference type="ChEBI" id="CHEBI:83071"/>
        <dbReference type="ChEBI" id="CHEBI:195187"/>
    </reaction>
    <physiologicalReaction direction="left-to-right" evidence="1">
        <dbReference type="Rhea" id="RHEA:76236"/>
    </physiologicalReaction>
</comment>
<comment type="cofactor">
    <cofactor evidence="1">
        <name>Mg(2+)</name>
        <dbReference type="ChEBI" id="CHEBI:18420"/>
    </cofactor>
    <text evidence="1">Magnesium is required for nucleotidyltransferase activity.</text>
</comment>
<comment type="cofactor">
    <cofactor evidence="1">
        <name>Ni(2+)</name>
        <dbReference type="ChEBI" id="CHEBI:49786"/>
    </cofactor>
    <text evidence="1">Nickel for phosphatase activity.</text>
</comment>
<comment type="subunit">
    <text evidence="1">Monomer. Can also form homodimers and oligomers.</text>
</comment>
<comment type="domain">
    <text evidence="1">Comprises two domains: an N-terminal domain containing the nucleotidyltransferase activity and a C-terminal HD domain associated with both phosphodiesterase and phosphatase activities.</text>
</comment>
<comment type="miscellaneous">
    <text evidence="1">A single active site specifically recognizes both ATP and CTP and is responsible for their addition.</text>
</comment>
<comment type="similarity">
    <text evidence="1">Belongs to the tRNA nucleotidyltransferase/poly(A) polymerase family. Bacterial CCA-adding enzyme type 1 subfamily.</text>
</comment>